<sequence>MSSAVTPSDQGLLPRGPIALEEFVKPFCDRFGLTKLPRHMHVILLSALFYQIINILSPVISRHLSTHYAKLSKKTRLNWDAHVVSSVQSIVLICLGYTCLKEVNAFPDKLFGYSVVAGDIYALTAGYFVWDLYITVRYVHITGIGFVIHAIAALFVITFSYRPYLMYYGPTYLSWELSTPFLNIHYFLDKTNRTGSKFQMINGFILIVTFICVRIAWGWFSAYSTAIEILNHINVAPWALSLFYLAANMSLNCLNLFWVSKMIDAIRRRAHGEKKSTPLQVTSEYAKKNI</sequence>
<proteinExistence type="predicted"/>
<accession>O13752</accession>
<gene>
    <name type="ORF">SPAC17A2.02c</name>
</gene>
<feature type="chain" id="PRO_0000343434" description="Uncharacterized TLC domain-containing protein C17A2.02c">
    <location>
        <begin position="1"/>
        <end position="290"/>
    </location>
</feature>
<feature type="transmembrane region" description="Helical" evidence="1">
    <location>
        <begin position="40"/>
        <end position="60"/>
    </location>
</feature>
<feature type="transmembrane region" description="Helical" evidence="1">
    <location>
        <begin position="80"/>
        <end position="100"/>
    </location>
</feature>
<feature type="transmembrane region" description="Helical" evidence="1">
    <location>
        <begin position="110"/>
        <end position="130"/>
    </location>
</feature>
<feature type="transmembrane region" description="Helical" evidence="1">
    <location>
        <begin position="139"/>
        <end position="159"/>
    </location>
</feature>
<feature type="transmembrane region" description="Helical" evidence="1">
    <location>
        <begin position="166"/>
        <end position="188"/>
    </location>
</feature>
<feature type="transmembrane region" description="Helical" evidence="1">
    <location>
        <begin position="200"/>
        <end position="220"/>
    </location>
</feature>
<feature type="transmembrane region" description="Helical" evidence="1">
    <location>
        <begin position="238"/>
        <end position="260"/>
    </location>
</feature>
<feature type="domain" description="TLC" evidence="2">
    <location>
        <begin position="74"/>
        <end position="271"/>
    </location>
</feature>
<protein>
    <recommendedName>
        <fullName>Uncharacterized TLC domain-containing protein C17A2.02c</fullName>
    </recommendedName>
</protein>
<reference key="1">
    <citation type="journal article" date="2002" name="Nature">
        <title>The genome sequence of Schizosaccharomyces pombe.</title>
        <authorList>
            <person name="Wood V."/>
            <person name="Gwilliam R."/>
            <person name="Rajandream M.A."/>
            <person name="Lyne M.H."/>
            <person name="Lyne R."/>
            <person name="Stewart A."/>
            <person name="Sgouros J.G."/>
            <person name="Peat N."/>
            <person name="Hayles J."/>
            <person name="Baker S.G."/>
            <person name="Basham D."/>
            <person name="Bowman S."/>
            <person name="Brooks K."/>
            <person name="Brown D."/>
            <person name="Brown S."/>
            <person name="Chillingworth T."/>
            <person name="Churcher C.M."/>
            <person name="Collins M."/>
            <person name="Connor R."/>
            <person name="Cronin A."/>
            <person name="Davis P."/>
            <person name="Feltwell T."/>
            <person name="Fraser A."/>
            <person name="Gentles S."/>
            <person name="Goble A."/>
            <person name="Hamlin N."/>
            <person name="Harris D.E."/>
            <person name="Hidalgo J."/>
            <person name="Hodgson G."/>
            <person name="Holroyd S."/>
            <person name="Hornsby T."/>
            <person name="Howarth S."/>
            <person name="Huckle E.J."/>
            <person name="Hunt S."/>
            <person name="Jagels K."/>
            <person name="James K.D."/>
            <person name="Jones L."/>
            <person name="Jones M."/>
            <person name="Leather S."/>
            <person name="McDonald S."/>
            <person name="McLean J."/>
            <person name="Mooney P."/>
            <person name="Moule S."/>
            <person name="Mungall K.L."/>
            <person name="Murphy L.D."/>
            <person name="Niblett D."/>
            <person name="Odell C."/>
            <person name="Oliver K."/>
            <person name="O'Neil S."/>
            <person name="Pearson D."/>
            <person name="Quail M.A."/>
            <person name="Rabbinowitsch E."/>
            <person name="Rutherford K.M."/>
            <person name="Rutter S."/>
            <person name="Saunders D."/>
            <person name="Seeger K."/>
            <person name="Sharp S."/>
            <person name="Skelton J."/>
            <person name="Simmonds M.N."/>
            <person name="Squares R."/>
            <person name="Squares S."/>
            <person name="Stevens K."/>
            <person name="Taylor K."/>
            <person name="Taylor R.G."/>
            <person name="Tivey A."/>
            <person name="Walsh S.V."/>
            <person name="Warren T."/>
            <person name="Whitehead S."/>
            <person name="Woodward J.R."/>
            <person name="Volckaert G."/>
            <person name="Aert R."/>
            <person name="Robben J."/>
            <person name="Grymonprez B."/>
            <person name="Weltjens I."/>
            <person name="Vanstreels E."/>
            <person name="Rieger M."/>
            <person name="Schaefer M."/>
            <person name="Mueller-Auer S."/>
            <person name="Gabel C."/>
            <person name="Fuchs M."/>
            <person name="Duesterhoeft A."/>
            <person name="Fritzc C."/>
            <person name="Holzer E."/>
            <person name="Moestl D."/>
            <person name="Hilbert H."/>
            <person name="Borzym K."/>
            <person name="Langer I."/>
            <person name="Beck A."/>
            <person name="Lehrach H."/>
            <person name="Reinhardt R."/>
            <person name="Pohl T.M."/>
            <person name="Eger P."/>
            <person name="Zimmermann W."/>
            <person name="Wedler H."/>
            <person name="Wambutt R."/>
            <person name="Purnelle B."/>
            <person name="Goffeau A."/>
            <person name="Cadieu E."/>
            <person name="Dreano S."/>
            <person name="Gloux S."/>
            <person name="Lelaure V."/>
            <person name="Mottier S."/>
            <person name="Galibert F."/>
            <person name="Aves S.J."/>
            <person name="Xiang Z."/>
            <person name="Hunt C."/>
            <person name="Moore K."/>
            <person name="Hurst S.M."/>
            <person name="Lucas M."/>
            <person name="Rochet M."/>
            <person name="Gaillardin C."/>
            <person name="Tallada V.A."/>
            <person name="Garzon A."/>
            <person name="Thode G."/>
            <person name="Daga R.R."/>
            <person name="Cruzado L."/>
            <person name="Jimenez J."/>
            <person name="Sanchez M."/>
            <person name="del Rey F."/>
            <person name="Benito J."/>
            <person name="Dominguez A."/>
            <person name="Revuelta J.L."/>
            <person name="Moreno S."/>
            <person name="Armstrong J."/>
            <person name="Forsburg S.L."/>
            <person name="Cerutti L."/>
            <person name="Lowe T."/>
            <person name="McCombie W.R."/>
            <person name="Paulsen I."/>
            <person name="Potashkin J."/>
            <person name="Shpakovski G.V."/>
            <person name="Ussery D."/>
            <person name="Barrell B.G."/>
            <person name="Nurse P."/>
        </authorList>
    </citation>
    <scope>NUCLEOTIDE SEQUENCE [LARGE SCALE GENOMIC DNA]</scope>
    <source>
        <strain>972 / ATCC 24843</strain>
    </source>
</reference>
<reference key="2">
    <citation type="journal article" date="2006" name="Nat. Biotechnol.">
        <title>ORFeome cloning and global analysis of protein localization in the fission yeast Schizosaccharomyces pombe.</title>
        <authorList>
            <person name="Matsuyama A."/>
            <person name="Arai R."/>
            <person name="Yashiroda Y."/>
            <person name="Shirai A."/>
            <person name="Kamata A."/>
            <person name="Sekido S."/>
            <person name="Kobayashi Y."/>
            <person name="Hashimoto A."/>
            <person name="Hamamoto M."/>
            <person name="Hiraoka Y."/>
            <person name="Horinouchi S."/>
            <person name="Yoshida M."/>
        </authorList>
    </citation>
    <scope>SUBCELLULAR LOCATION [LARGE SCALE ANALYSIS]</scope>
</reference>
<organism>
    <name type="scientific">Schizosaccharomyces pombe (strain 972 / ATCC 24843)</name>
    <name type="common">Fission yeast</name>
    <dbReference type="NCBI Taxonomy" id="284812"/>
    <lineage>
        <taxon>Eukaryota</taxon>
        <taxon>Fungi</taxon>
        <taxon>Dikarya</taxon>
        <taxon>Ascomycota</taxon>
        <taxon>Taphrinomycotina</taxon>
        <taxon>Schizosaccharomycetes</taxon>
        <taxon>Schizosaccharomycetales</taxon>
        <taxon>Schizosaccharomycetaceae</taxon>
        <taxon>Schizosaccharomyces</taxon>
    </lineage>
</organism>
<keyword id="KW-0256">Endoplasmic reticulum</keyword>
<keyword id="KW-0472">Membrane</keyword>
<keyword id="KW-1185">Reference proteome</keyword>
<keyword id="KW-0812">Transmembrane</keyword>
<keyword id="KW-1133">Transmembrane helix</keyword>
<comment type="subcellular location">
    <subcellularLocation>
        <location evidence="3">Endoplasmic reticulum membrane</location>
        <topology evidence="3">Multi-pass membrane protein</topology>
    </subcellularLocation>
</comment>
<evidence type="ECO:0000255" key="1"/>
<evidence type="ECO:0000255" key="2">
    <source>
        <dbReference type="PROSITE-ProRule" id="PRU00205"/>
    </source>
</evidence>
<evidence type="ECO:0000269" key="3">
    <source>
    </source>
</evidence>
<name>YF22_SCHPO</name>
<dbReference type="EMBL" id="CU329670">
    <property type="protein sequence ID" value="CAB16558.1"/>
    <property type="molecule type" value="Genomic_DNA"/>
</dbReference>
<dbReference type="PIR" id="T37803">
    <property type="entry name" value="T37803"/>
</dbReference>
<dbReference type="SMR" id="O13752"/>
<dbReference type="BioGRID" id="278840">
    <property type="interactions" value="2"/>
</dbReference>
<dbReference type="FunCoup" id="O13752">
    <property type="interactions" value="193"/>
</dbReference>
<dbReference type="STRING" id="284812.O13752"/>
<dbReference type="iPTMnet" id="O13752"/>
<dbReference type="PaxDb" id="4896-SPAC17A2.02c.1"/>
<dbReference type="EnsemblFungi" id="SPAC17A2.02c.1">
    <property type="protein sequence ID" value="SPAC17A2.02c.1:pep"/>
    <property type="gene ID" value="SPAC17A2.02c"/>
</dbReference>
<dbReference type="KEGG" id="spo:2542376"/>
<dbReference type="PomBase" id="SPAC17A2.02c"/>
<dbReference type="VEuPathDB" id="FungiDB:SPAC17A2.02c"/>
<dbReference type="eggNOG" id="KOG4561">
    <property type="taxonomic scope" value="Eukaryota"/>
</dbReference>
<dbReference type="HOGENOM" id="CLU_034597_0_1_1"/>
<dbReference type="InParanoid" id="O13752"/>
<dbReference type="OMA" id="MPVYYSH"/>
<dbReference type="PhylomeDB" id="O13752"/>
<dbReference type="PRO" id="PR:O13752"/>
<dbReference type="Proteomes" id="UP000002485">
    <property type="component" value="Chromosome I"/>
</dbReference>
<dbReference type="GO" id="GO:0005783">
    <property type="term" value="C:endoplasmic reticulum"/>
    <property type="evidence" value="ECO:0007005"/>
    <property type="project" value="PomBase"/>
</dbReference>
<dbReference type="GO" id="GO:0005789">
    <property type="term" value="C:endoplasmic reticulum membrane"/>
    <property type="evidence" value="ECO:0007669"/>
    <property type="project" value="UniProtKB-SubCell"/>
</dbReference>
<dbReference type="GO" id="GO:0055088">
    <property type="term" value="P:lipid homeostasis"/>
    <property type="evidence" value="ECO:0000318"/>
    <property type="project" value="GO_Central"/>
</dbReference>
<dbReference type="GO" id="GO:0007009">
    <property type="term" value="P:plasma membrane organization"/>
    <property type="evidence" value="ECO:0000266"/>
    <property type="project" value="PomBase"/>
</dbReference>
<dbReference type="InterPro" id="IPR006634">
    <property type="entry name" value="TLC-dom"/>
</dbReference>
<dbReference type="InterPro" id="IPR050846">
    <property type="entry name" value="TLCD"/>
</dbReference>
<dbReference type="PANTHER" id="PTHR13439">
    <property type="entry name" value="CT120 PROTEIN"/>
    <property type="match status" value="1"/>
</dbReference>
<dbReference type="PANTHER" id="PTHR13439:SF0">
    <property type="entry name" value="TOPOISOMERASE I DAMAGE AFFECTED PROTEIN 4"/>
    <property type="match status" value="1"/>
</dbReference>
<dbReference type="Pfam" id="PF03798">
    <property type="entry name" value="TRAM_LAG1_CLN8"/>
    <property type="match status" value="1"/>
</dbReference>
<dbReference type="SMART" id="SM00724">
    <property type="entry name" value="TLC"/>
    <property type="match status" value="1"/>
</dbReference>
<dbReference type="PROSITE" id="PS50922">
    <property type="entry name" value="TLC"/>
    <property type="match status" value="1"/>
</dbReference>